<protein>
    <recommendedName>
        <fullName evidence="1">2,3-bisphosphoglycerate-dependent phosphoglycerate mutase</fullName>
        <shortName evidence="1">BPG-dependent PGAM</shortName>
        <shortName evidence="1">PGAM</shortName>
        <shortName evidence="1">Phosphoglyceromutase</shortName>
        <shortName evidence="1">dPGM</shortName>
        <ecNumber evidence="1">5.4.2.11</ecNumber>
    </recommendedName>
</protein>
<comment type="function">
    <text evidence="1">Catalyzes the interconversion of 2-phosphoglycerate and 3-phosphoglycerate.</text>
</comment>
<comment type="catalytic activity">
    <reaction evidence="1">
        <text>(2R)-2-phosphoglycerate = (2R)-3-phosphoglycerate</text>
        <dbReference type="Rhea" id="RHEA:15901"/>
        <dbReference type="ChEBI" id="CHEBI:58272"/>
        <dbReference type="ChEBI" id="CHEBI:58289"/>
        <dbReference type="EC" id="5.4.2.11"/>
    </reaction>
</comment>
<comment type="pathway">
    <text evidence="1">Carbohydrate degradation; glycolysis; pyruvate from D-glyceraldehyde 3-phosphate: step 3/5.</text>
</comment>
<comment type="similarity">
    <text evidence="1">Belongs to the phosphoglycerate mutase family. BPG-dependent PGAM subfamily.</text>
</comment>
<reference key="1">
    <citation type="submission" date="2008-10" db="EMBL/GenBank/DDBJ databases">
        <title>Genome sequence of Bacillus cereus AH820.</title>
        <authorList>
            <person name="Dodson R.J."/>
            <person name="Durkin A.S."/>
            <person name="Rosovitz M.J."/>
            <person name="Rasko D.A."/>
            <person name="Hoffmaster A."/>
            <person name="Ravel J."/>
            <person name="Sutton G."/>
        </authorList>
    </citation>
    <scope>NUCLEOTIDE SEQUENCE [LARGE SCALE GENOMIC DNA]</scope>
    <source>
        <strain>AH820</strain>
    </source>
</reference>
<sequence length="245" mass="28355">MIKLVLIRHGQSLWNLENRFTGWTDVDLSENGLSEAREAGAILKKNGYTFDVAYTSVLKRAIRTLWIVLHEMDLAWVPVHKCWKLNERHYGALQGLNKDETAKKYGEEQVHIWRRSIDVRPPALTEDDPRYEMNDLRYKALKKGEFPLTECLVDTEKRVLDYWHSEIAPKLKNGNKVIISSHGNTIRSLVKYLDNLSSDGVVSLNIPTSIPLVYELDENLRPIRHYYLSMDGEVPEGEIPKHITF</sequence>
<evidence type="ECO:0000255" key="1">
    <source>
        <dbReference type="HAMAP-Rule" id="MF_01039"/>
    </source>
</evidence>
<gene>
    <name evidence="1" type="primary">gpmA</name>
    <name type="ordered locus">BCAH820_2509</name>
</gene>
<organism>
    <name type="scientific">Bacillus cereus (strain AH820)</name>
    <dbReference type="NCBI Taxonomy" id="405535"/>
    <lineage>
        <taxon>Bacteria</taxon>
        <taxon>Bacillati</taxon>
        <taxon>Bacillota</taxon>
        <taxon>Bacilli</taxon>
        <taxon>Bacillales</taxon>
        <taxon>Bacillaceae</taxon>
        <taxon>Bacillus</taxon>
        <taxon>Bacillus cereus group</taxon>
    </lineage>
</organism>
<feature type="chain" id="PRO_1000135915" description="2,3-bisphosphoglycerate-dependent phosphoglycerate mutase">
    <location>
        <begin position="1"/>
        <end position="245"/>
    </location>
</feature>
<feature type="active site" description="Tele-phosphohistidine intermediate" evidence="1">
    <location>
        <position position="9"/>
    </location>
</feature>
<feature type="active site" description="Proton donor/acceptor" evidence="1">
    <location>
        <position position="87"/>
    </location>
</feature>
<feature type="binding site" evidence="1">
    <location>
        <begin position="8"/>
        <end position="15"/>
    </location>
    <ligand>
        <name>substrate</name>
    </ligand>
</feature>
<feature type="binding site" evidence="1">
    <location>
        <begin position="21"/>
        <end position="22"/>
    </location>
    <ligand>
        <name>substrate</name>
    </ligand>
</feature>
<feature type="binding site" evidence="1">
    <location>
        <position position="60"/>
    </location>
    <ligand>
        <name>substrate</name>
    </ligand>
</feature>
<feature type="binding site" evidence="1">
    <location>
        <begin position="87"/>
        <end position="90"/>
    </location>
    <ligand>
        <name>substrate</name>
    </ligand>
</feature>
<feature type="binding site" evidence="1">
    <location>
        <position position="98"/>
    </location>
    <ligand>
        <name>substrate</name>
    </ligand>
</feature>
<feature type="binding site" evidence="1">
    <location>
        <begin position="114"/>
        <end position="115"/>
    </location>
    <ligand>
        <name>substrate</name>
    </ligand>
</feature>
<feature type="binding site" evidence="1">
    <location>
        <begin position="183"/>
        <end position="184"/>
    </location>
    <ligand>
        <name>substrate</name>
    </ligand>
</feature>
<feature type="site" description="Transition state stabilizer" evidence="1">
    <location>
        <position position="182"/>
    </location>
</feature>
<proteinExistence type="inferred from homology"/>
<dbReference type="EC" id="5.4.2.11" evidence="1"/>
<dbReference type="EMBL" id="CP001283">
    <property type="protein sequence ID" value="ACK88968.1"/>
    <property type="molecule type" value="Genomic_DNA"/>
</dbReference>
<dbReference type="RefSeq" id="WP_000594139.1">
    <property type="nucleotide sequence ID" value="NC_011773.1"/>
</dbReference>
<dbReference type="SMR" id="B7JPK2"/>
<dbReference type="GeneID" id="45022358"/>
<dbReference type="KEGG" id="bcu:BCAH820_2509"/>
<dbReference type="HOGENOM" id="CLU_033323_1_1_9"/>
<dbReference type="UniPathway" id="UPA00109">
    <property type="reaction ID" value="UER00186"/>
</dbReference>
<dbReference type="Proteomes" id="UP000001363">
    <property type="component" value="Chromosome"/>
</dbReference>
<dbReference type="GO" id="GO:0004619">
    <property type="term" value="F:phosphoglycerate mutase activity"/>
    <property type="evidence" value="ECO:0007669"/>
    <property type="project" value="UniProtKB-EC"/>
</dbReference>
<dbReference type="GO" id="GO:0006094">
    <property type="term" value="P:gluconeogenesis"/>
    <property type="evidence" value="ECO:0007669"/>
    <property type="project" value="UniProtKB-UniRule"/>
</dbReference>
<dbReference type="GO" id="GO:0006096">
    <property type="term" value="P:glycolytic process"/>
    <property type="evidence" value="ECO:0007669"/>
    <property type="project" value="UniProtKB-UniRule"/>
</dbReference>
<dbReference type="CDD" id="cd07067">
    <property type="entry name" value="HP_PGM_like"/>
    <property type="match status" value="1"/>
</dbReference>
<dbReference type="FunFam" id="3.40.50.1240:FF:000003">
    <property type="entry name" value="2,3-bisphosphoglycerate-dependent phosphoglycerate mutase"/>
    <property type="match status" value="1"/>
</dbReference>
<dbReference type="Gene3D" id="3.40.50.1240">
    <property type="entry name" value="Phosphoglycerate mutase-like"/>
    <property type="match status" value="1"/>
</dbReference>
<dbReference type="HAMAP" id="MF_01039">
    <property type="entry name" value="PGAM_GpmA"/>
    <property type="match status" value="1"/>
</dbReference>
<dbReference type="InterPro" id="IPR013078">
    <property type="entry name" value="His_Pase_superF_clade-1"/>
</dbReference>
<dbReference type="InterPro" id="IPR029033">
    <property type="entry name" value="His_PPase_superfam"/>
</dbReference>
<dbReference type="InterPro" id="IPR001345">
    <property type="entry name" value="PG/BPGM_mutase_AS"/>
</dbReference>
<dbReference type="InterPro" id="IPR005952">
    <property type="entry name" value="Phosphogly_mut1"/>
</dbReference>
<dbReference type="NCBIfam" id="TIGR01258">
    <property type="entry name" value="pgm_1"/>
    <property type="match status" value="1"/>
</dbReference>
<dbReference type="NCBIfam" id="NF010713">
    <property type="entry name" value="PRK14115.1"/>
    <property type="match status" value="1"/>
</dbReference>
<dbReference type="PANTHER" id="PTHR11931">
    <property type="entry name" value="PHOSPHOGLYCERATE MUTASE"/>
    <property type="match status" value="1"/>
</dbReference>
<dbReference type="Pfam" id="PF00300">
    <property type="entry name" value="His_Phos_1"/>
    <property type="match status" value="1"/>
</dbReference>
<dbReference type="PIRSF" id="PIRSF000709">
    <property type="entry name" value="6PFK_2-Ptase"/>
    <property type="match status" value="1"/>
</dbReference>
<dbReference type="SMART" id="SM00855">
    <property type="entry name" value="PGAM"/>
    <property type="match status" value="1"/>
</dbReference>
<dbReference type="SUPFAM" id="SSF53254">
    <property type="entry name" value="Phosphoglycerate mutase-like"/>
    <property type="match status" value="1"/>
</dbReference>
<dbReference type="PROSITE" id="PS00175">
    <property type="entry name" value="PG_MUTASE"/>
    <property type="match status" value="1"/>
</dbReference>
<accession>B7JPK2</accession>
<keyword id="KW-0312">Gluconeogenesis</keyword>
<keyword id="KW-0324">Glycolysis</keyword>
<keyword id="KW-0413">Isomerase</keyword>
<name>GPMA_BACC0</name>